<feature type="chain" id="PRO_1000014882" description="Large ribosomal subunit protein bL9">
    <location>
        <begin position="1"/>
        <end position="150"/>
    </location>
</feature>
<accession>A1WGK4</accession>
<keyword id="KW-1185">Reference proteome</keyword>
<keyword id="KW-0687">Ribonucleoprotein</keyword>
<keyword id="KW-0689">Ribosomal protein</keyword>
<keyword id="KW-0694">RNA-binding</keyword>
<keyword id="KW-0699">rRNA-binding</keyword>
<comment type="function">
    <text evidence="1">Binds to the 23S rRNA.</text>
</comment>
<comment type="similarity">
    <text evidence="1">Belongs to the bacterial ribosomal protein bL9 family.</text>
</comment>
<gene>
    <name evidence="1" type="primary">rplI</name>
    <name type="ordered locus">Veis_0984</name>
</gene>
<organism>
    <name type="scientific">Verminephrobacter eiseniae (strain EF01-2)</name>
    <dbReference type="NCBI Taxonomy" id="391735"/>
    <lineage>
        <taxon>Bacteria</taxon>
        <taxon>Pseudomonadati</taxon>
        <taxon>Pseudomonadota</taxon>
        <taxon>Betaproteobacteria</taxon>
        <taxon>Burkholderiales</taxon>
        <taxon>Comamonadaceae</taxon>
        <taxon>Verminephrobacter</taxon>
    </lineage>
</organism>
<proteinExistence type="inferred from homology"/>
<sequence>MQIILLDKVVNLGNLGQIVKVKDGYARNFLIPTGRARRATEAAKAEFEAKRAELEKTAATNLAQAQAQGEKLAGTAIKLTQKAGVDGRLFGSVTNHDIAEELNKQGFKLAKSRIRLPNGPIKMVGDNTVSVVLHTDVVVEVIVSVYGETA</sequence>
<name>RL9_VEREI</name>
<evidence type="ECO:0000255" key="1">
    <source>
        <dbReference type="HAMAP-Rule" id="MF_00503"/>
    </source>
</evidence>
<evidence type="ECO:0000305" key="2"/>
<protein>
    <recommendedName>
        <fullName evidence="1">Large ribosomal subunit protein bL9</fullName>
    </recommendedName>
    <alternativeName>
        <fullName evidence="2">50S ribosomal protein L9</fullName>
    </alternativeName>
</protein>
<reference key="1">
    <citation type="submission" date="2006-12" db="EMBL/GenBank/DDBJ databases">
        <title>Complete sequence of chromosome 1 of Verminephrobacter eiseniae EF01-2.</title>
        <authorList>
            <person name="Copeland A."/>
            <person name="Lucas S."/>
            <person name="Lapidus A."/>
            <person name="Barry K."/>
            <person name="Detter J.C."/>
            <person name="Glavina del Rio T."/>
            <person name="Dalin E."/>
            <person name="Tice H."/>
            <person name="Pitluck S."/>
            <person name="Chertkov O."/>
            <person name="Brettin T."/>
            <person name="Bruce D."/>
            <person name="Han C."/>
            <person name="Tapia R."/>
            <person name="Gilna P."/>
            <person name="Schmutz J."/>
            <person name="Larimer F."/>
            <person name="Land M."/>
            <person name="Hauser L."/>
            <person name="Kyrpides N."/>
            <person name="Kim E."/>
            <person name="Stahl D."/>
            <person name="Richardson P."/>
        </authorList>
    </citation>
    <scope>NUCLEOTIDE SEQUENCE [LARGE SCALE GENOMIC DNA]</scope>
    <source>
        <strain>EF01-2</strain>
    </source>
</reference>
<dbReference type="EMBL" id="CP000542">
    <property type="protein sequence ID" value="ABM56761.1"/>
    <property type="molecule type" value="Genomic_DNA"/>
</dbReference>
<dbReference type="RefSeq" id="WP_011808773.1">
    <property type="nucleotide sequence ID" value="NC_008786.1"/>
</dbReference>
<dbReference type="SMR" id="A1WGK4"/>
<dbReference type="STRING" id="391735.Veis_0984"/>
<dbReference type="GeneID" id="76459661"/>
<dbReference type="KEGG" id="vei:Veis_0984"/>
<dbReference type="eggNOG" id="COG0359">
    <property type="taxonomic scope" value="Bacteria"/>
</dbReference>
<dbReference type="HOGENOM" id="CLU_078938_4_1_4"/>
<dbReference type="OrthoDB" id="9788336at2"/>
<dbReference type="Proteomes" id="UP000000374">
    <property type="component" value="Chromosome"/>
</dbReference>
<dbReference type="GO" id="GO:1990904">
    <property type="term" value="C:ribonucleoprotein complex"/>
    <property type="evidence" value="ECO:0007669"/>
    <property type="project" value="UniProtKB-KW"/>
</dbReference>
<dbReference type="GO" id="GO:0005840">
    <property type="term" value="C:ribosome"/>
    <property type="evidence" value="ECO:0007669"/>
    <property type="project" value="UniProtKB-KW"/>
</dbReference>
<dbReference type="GO" id="GO:0019843">
    <property type="term" value="F:rRNA binding"/>
    <property type="evidence" value="ECO:0007669"/>
    <property type="project" value="UniProtKB-UniRule"/>
</dbReference>
<dbReference type="GO" id="GO:0003735">
    <property type="term" value="F:structural constituent of ribosome"/>
    <property type="evidence" value="ECO:0007669"/>
    <property type="project" value="InterPro"/>
</dbReference>
<dbReference type="GO" id="GO:0006412">
    <property type="term" value="P:translation"/>
    <property type="evidence" value="ECO:0007669"/>
    <property type="project" value="UniProtKB-UniRule"/>
</dbReference>
<dbReference type="Gene3D" id="3.10.430.100">
    <property type="entry name" value="Ribosomal protein L9, C-terminal domain"/>
    <property type="match status" value="1"/>
</dbReference>
<dbReference type="Gene3D" id="3.40.5.10">
    <property type="entry name" value="Ribosomal protein L9, N-terminal domain"/>
    <property type="match status" value="1"/>
</dbReference>
<dbReference type="HAMAP" id="MF_00503">
    <property type="entry name" value="Ribosomal_bL9"/>
    <property type="match status" value="1"/>
</dbReference>
<dbReference type="InterPro" id="IPR000244">
    <property type="entry name" value="Ribosomal_bL9"/>
</dbReference>
<dbReference type="InterPro" id="IPR009027">
    <property type="entry name" value="Ribosomal_bL9/RNase_H1_N"/>
</dbReference>
<dbReference type="InterPro" id="IPR020594">
    <property type="entry name" value="Ribosomal_bL9_bac/chp"/>
</dbReference>
<dbReference type="InterPro" id="IPR020069">
    <property type="entry name" value="Ribosomal_bL9_C"/>
</dbReference>
<dbReference type="InterPro" id="IPR036791">
    <property type="entry name" value="Ribosomal_bL9_C_sf"/>
</dbReference>
<dbReference type="InterPro" id="IPR020070">
    <property type="entry name" value="Ribosomal_bL9_N"/>
</dbReference>
<dbReference type="InterPro" id="IPR036935">
    <property type="entry name" value="Ribosomal_bL9_N_sf"/>
</dbReference>
<dbReference type="NCBIfam" id="TIGR00158">
    <property type="entry name" value="L9"/>
    <property type="match status" value="1"/>
</dbReference>
<dbReference type="PANTHER" id="PTHR21368">
    <property type="entry name" value="50S RIBOSOMAL PROTEIN L9"/>
    <property type="match status" value="1"/>
</dbReference>
<dbReference type="Pfam" id="PF03948">
    <property type="entry name" value="Ribosomal_L9_C"/>
    <property type="match status" value="1"/>
</dbReference>
<dbReference type="Pfam" id="PF01281">
    <property type="entry name" value="Ribosomal_L9_N"/>
    <property type="match status" value="1"/>
</dbReference>
<dbReference type="SUPFAM" id="SSF55658">
    <property type="entry name" value="L9 N-domain-like"/>
    <property type="match status" value="1"/>
</dbReference>
<dbReference type="SUPFAM" id="SSF55653">
    <property type="entry name" value="Ribosomal protein L9 C-domain"/>
    <property type="match status" value="1"/>
</dbReference>
<dbReference type="PROSITE" id="PS00651">
    <property type="entry name" value="RIBOSOMAL_L9"/>
    <property type="match status" value="1"/>
</dbReference>